<evidence type="ECO:0000250" key="1">
    <source>
        <dbReference type="UniProtKB" id="D4A702"/>
    </source>
</evidence>
<evidence type="ECO:0000250" key="2">
    <source>
        <dbReference type="UniProtKB" id="Q91YE8"/>
    </source>
</evidence>
<evidence type="ECO:0000255" key="3">
    <source>
        <dbReference type="PROSITE-ProRule" id="PRU00143"/>
    </source>
</evidence>
<evidence type="ECO:0000256" key="4">
    <source>
        <dbReference type="SAM" id="MobiDB-lite"/>
    </source>
</evidence>
<evidence type="ECO:0000269" key="5">
    <source>
    </source>
</evidence>
<evidence type="ECO:0000269" key="6">
    <source>
    </source>
</evidence>
<evidence type="ECO:0000269" key="7">
    <source>
    </source>
</evidence>
<evidence type="ECO:0000269" key="8">
    <source>
    </source>
</evidence>
<evidence type="ECO:0000269" key="9">
    <source>
    </source>
</evidence>
<evidence type="ECO:0000269" key="10">
    <source>
    </source>
</evidence>
<evidence type="ECO:0000269" key="11">
    <source>
    </source>
</evidence>
<evidence type="ECO:0000269" key="12">
    <source>
    </source>
</evidence>
<evidence type="ECO:0000269" key="13">
    <source>
    </source>
</evidence>
<evidence type="ECO:0000269" key="14">
    <source>
    </source>
</evidence>
<evidence type="ECO:0000269" key="15">
    <source>
    </source>
</evidence>
<evidence type="ECO:0000269" key="16">
    <source>
    </source>
</evidence>
<evidence type="ECO:0000269" key="17">
    <source>
    </source>
</evidence>
<evidence type="ECO:0000269" key="18">
    <source>
    </source>
</evidence>
<evidence type="ECO:0000269" key="19">
    <source ref="6"/>
</evidence>
<evidence type="ECO:0000303" key="20">
    <source>
    </source>
</evidence>
<evidence type="ECO:0000303" key="21">
    <source>
    </source>
</evidence>
<evidence type="ECO:0000303" key="22">
    <source>
    </source>
</evidence>
<evidence type="ECO:0000305" key="23"/>
<evidence type="ECO:0000305" key="24">
    <source>
    </source>
</evidence>
<evidence type="ECO:0000305" key="25">
    <source>
    </source>
</evidence>
<evidence type="ECO:0000305" key="26">
    <source>
    </source>
</evidence>
<evidence type="ECO:0007744" key="27">
    <source>
    </source>
</evidence>
<sequence>MGTGDFICISMTGGAPWGFRLQGGKEQKQPLQVAKIRNQSKASGSGLCEGDEVVSINGNPCADLTYPEVIKLMESITDSLQMLIKRPSSGISEALISENENKNLEHLTHGGYVESTTLQIRPATKTQCTEFFLAPVKTEVPLAENQRSGPDCAGSLKEETGPSYQRAPQMPDSQRGRVAEELILREKVEAVQPGPVVELQLSLSQERHKGASGPLVALPGAEKSKSPDPDPNLSHDRIVHINSIPTNEKADPFLRSSKIIQISSGRELRVIQESEAGDAGLPRVEVILDCSDRQKTEGCRLQAGKECVDSPVEGGQSEAPPSLVSFAVSSEGTEQGEDPRSEKDHSRPHKHRARHARLRRSESLSEKQVKEAKSKCKSIALLLTDAPNPNSKGVLMFKKRRRRARKYTLVSYGTGELEREADEEEEGDKEDTCEVAFLGASESEVDEELLSDVDDNTQVVNFDWDSGLVDIEKKLNRGDKMEMLPDTTGKGALMFAKRRERMDQITAQKEEDKVGGTPSREQDAAQTDGLRTTTSYQRKEEESVRTQSSVSKSYIEVSHGLGHVPQQNGFSGTSETANIQRMVPMNRTAKPFPGSVNQPATPFSPTRNMTSPIADFPAPPPYSAVTPPPDAFSRGVSSPIAGPAQPPPWPQPAPWSQPAFYDSSERIASRDERISVPAKRTGILQEAKRRSTTKPMFTFKEPKVSPNPELLSLLQNSEGKRGTGAGGDSGPEEDYLSLGAEACNFMQSSSAKQKTPPPVAPKPAVKSSSSQPVTPVSPVWSPGVAPTQPPAFPTSNPSKGTVVSSIKIAQPSYPPARPASTLNVAGPFKGPQAAVASQNYTPKPTVSTPTVNAVQPGAVGPSNELPGMSGRGAQLFAKRQSRMEKYVVDSDTVQAHAARAQSPTPSLPASWKYSSNVRAPPPVAYNPIHSPSYPLAALKSQPSAAQPSKMGKKKGKKPLNALDVMKHQPYQLNASLFTFQPPDAKDGLPQKSSVKVNSALAMKQALPPRPVNAASPTNVQASSVYSVPAYTSPPSFFAEASSPVSASPVPVGIPTSPKQESASSSYFVAPRPKFSAKKSGVTIQVWKPSVVEE</sequence>
<name>SYNP2_HUMAN</name>
<reference key="1">
    <citation type="journal article" date="2008" name="Biochem. Biophys. Res. Commun.">
        <title>Multiple isoforms of the tumor suppressor myopodin are simultaneously transcribed in cancer cells.</title>
        <authorList>
            <person name="De Ganck A."/>
            <person name="De Corte V."/>
            <person name="Staes A."/>
            <person name="Gevaert K."/>
            <person name="Vandekerckhove J."/>
            <person name="Gettemans J."/>
        </authorList>
    </citation>
    <scope>NUCLEOTIDE SEQUENCE [MRNA] (ISOFORM 3)</scope>
    <scope>ALTERNATIVE SPLICING (ISOFORMS 1; 2 AND 3)</scope>
    <scope>SUBCELLULAR LOCATION</scope>
    <scope>VARIANT ALA-573</scope>
</reference>
<reference key="2">
    <citation type="journal article" date="2013" name="FASEB J.">
        <title>Prostate cancer cell migration induced by myopodin isoforms is associated with formation of morphologically and biochemically distinct actin networks.</title>
        <authorList>
            <person name="Kai F."/>
            <person name="Duncan R."/>
        </authorList>
    </citation>
    <scope>NUCLEOTIDE SEQUENCE [MRNA] (ISOFORM 4)</scope>
    <scope>VARIANT ALA-573</scope>
    <scope>FUNCTION (ISOFORMS 1; 2; 3; 4 AND 5)</scope>
    <scope>SUBCELLULAR LOCATION (ISOFORMS 1; 2; 3; 4 AND 5)</scope>
</reference>
<reference key="3">
    <citation type="journal article" date="2010" name="Eur. J. Cell Biol.">
        <title>The sarcomeric Z-disc component myopodin is a multiadapter protein that interacts with filamin and alpha-actinin.</title>
        <authorList>
            <person name="Linnemann A."/>
            <person name="van der Ven P.F."/>
            <person name="Vakeel P."/>
            <person name="Albinus B."/>
            <person name="Simonis D."/>
            <person name="Bendas G."/>
            <person name="Schenk J.A."/>
            <person name="Micheel B."/>
            <person name="Kley R.A."/>
            <person name="Fuerst D.O."/>
        </authorList>
    </citation>
    <scope>NUCLEOTIDE SEQUENCE [MRNA] (ISOFORM 5)</scope>
    <scope>VARIANT ALA-573</scope>
    <scope>INTERACTION WITH FLNC AND ACTN2</scope>
    <scope>TISSUE SPECIFICITY (ISOFORM 5)</scope>
    <scope>ALTERNATIVE PROMOTER USAGE</scope>
    <scope>DEVELOPMENTAL STAGE</scope>
    <scope>SUBCELLULAR LOCATION</scope>
    <source>
        <tissue>Skeletal muscle</tissue>
    </source>
</reference>
<reference key="4">
    <citation type="journal article" date="2007" name="BMC Genomics">
        <title>The full-ORF clone resource of the German cDNA consortium.</title>
        <authorList>
            <person name="Bechtel S."/>
            <person name="Rosenfelder H."/>
            <person name="Duda A."/>
            <person name="Schmidt C.P."/>
            <person name="Ernst U."/>
            <person name="Wellenreuther R."/>
            <person name="Mehrle A."/>
            <person name="Schuster C."/>
            <person name="Bahr A."/>
            <person name="Bloecker H."/>
            <person name="Heubner D."/>
            <person name="Hoerlein A."/>
            <person name="Michel G."/>
            <person name="Wedler H."/>
            <person name="Koehrer K."/>
            <person name="Ottenwaelder B."/>
            <person name="Poustka A."/>
            <person name="Wiemann S."/>
            <person name="Schupp I."/>
        </authorList>
    </citation>
    <scope>NUCLEOTIDE SEQUENCE [LARGE SCALE MRNA] (ISOFORM 1)</scope>
    <scope>VARIANTS ALA-154 AND ALA-573</scope>
    <source>
        <tissue>Skeletal muscle</tissue>
    </source>
</reference>
<reference key="5">
    <citation type="journal article" date="2005" name="Nature">
        <title>Generation and annotation of the DNA sequences of human chromosomes 2 and 4.</title>
        <authorList>
            <person name="Hillier L.W."/>
            <person name="Graves T.A."/>
            <person name="Fulton R.S."/>
            <person name="Fulton L.A."/>
            <person name="Pepin K.H."/>
            <person name="Minx P."/>
            <person name="Wagner-McPherson C."/>
            <person name="Layman D."/>
            <person name="Wylie K."/>
            <person name="Sekhon M."/>
            <person name="Becker M.C."/>
            <person name="Fewell G.A."/>
            <person name="Delehaunty K.D."/>
            <person name="Miner T.L."/>
            <person name="Nash W.E."/>
            <person name="Kremitzki C."/>
            <person name="Oddy L."/>
            <person name="Du H."/>
            <person name="Sun H."/>
            <person name="Bradshaw-Cordum H."/>
            <person name="Ali J."/>
            <person name="Carter J."/>
            <person name="Cordes M."/>
            <person name="Harris A."/>
            <person name="Isak A."/>
            <person name="van Brunt A."/>
            <person name="Nguyen C."/>
            <person name="Du F."/>
            <person name="Courtney L."/>
            <person name="Kalicki J."/>
            <person name="Ozersky P."/>
            <person name="Abbott S."/>
            <person name="Armstrong J."/>
            <person name="Belter E.A."/>
            <person name="Caruso L."/>
            <person name="Cedroni M."/>
            <person name="Cotton M."/>
            <person name="Davidson T."/>
            <person name="Desai A."/>
            <person name="Elliott G."/>
            <person name="Erb T."/>
            <person name="Fronick C."/>
            <person name="Gaige T."/>
            <person name="Haakenson W."/>
            <person name="Haglund K."/>
            <person name="Holmes A."/>
            <person name="Harkins R."/>
            <person name="Kim K."/>
            <person name="Kruchowski S.S."/>
            <person name="Strong C.M."/>
            <person name="Grewal N."/>
            <person name="Goyea E."/>
            <person name="Hou S."/>
            <person name="Levy A."/>
            <person name="Martinka S."/>
            <person name="Mead K."/>
            <person name="McLellan M.D."/>
            <person name="Meyer R."/>
            <person name="Randall-Maher J."/>
            <person name="Tomlinson C."/>
            <person name="Dauphin-Kohlberg S."/>
            <person name="Kozlowicz-Reilly A."/>
            <person name="Shah N."/>
            <person name="Swearengen-Shahid S."/>
            <person name="Snider J."/>
            <person name="Strong J.T."/>
            <person name="Thompson J."/>
            <person name="Yoakum M."/>
            <person name="Leonard S."/>
            <person name="Pearman C."/>
            <person name="Trani L."/>
            <person name="Radionenko M."/>
            <person name="Waligorski J.E."/>
            <person name="Wang C."/>
            <person name="Rock S.M."/>
            <person name="Tin-Wollam A.-M."/>
            <person name="Maupin R."/>
            <person name="Latreille P."/>
            <person name="Wendl M.C."/>
            <person name="Yang S.-P."/>
            <person name="Pohl C."/>
            <person name="Wallis J.W."/>
            <person name="Spieth J."/>
            <person name="Bieri T.A."/>
            <person name="Berkowicz N."/>
            <person name="Nelson J.O."/>
            <person name="Osborne J."/>
            <person name="Ding L."/>
            <person name="Meyer R."/>
            <person name="Sabo A."/>
            <person name="Shotland Y."/>
            <person name="Sinha P."/>
            <person name="Wohldmann P.E."/>
            <person name="Cook L.L."/>
            <person name="Hickenbotham M.T."/>
            <person name="Eldred J."/>
            <person name="Williams D."/>
            <person name="Jones T.A."/>
            <person name="She X."/>
            <person name="Ciccarelli F.D."/>
            <person name="Izaurralde E."/>
            <person name="Taylor J."/>
            <person name="Schmutz J."/>
            <person name="Myers R.M."/>
            <person name="Cox D.R."/>
            <person name="Huang X."/>
            <person name="McPherson J.D."/>
            <person name="Mardis E.R."/>
            <person name="Clifton S.W."/>
            <person name="Warren W.C."/>
            <person name="Chinwalla A.T."/>
            <person name="Eddy S.R."/>
            <person name="Marra M.A."/>
            <person name="Ovcharenko I."/>
            <person name="Furey T.S."/>
            <person name="Miller W."/>
            <person name="Eichler E.E."/>
            <person name="Bork P."/>
            <person name="Suyama M."/>
            <person name="Torrents D."/>
            <person name="Waterston R.H."/>
            <person name="Wilson R.K."/>
        </authorList>
    </citation>
    <scope>NUCLEOTIDE SEQUENCE [LARGE SCALE GENOMIC DNA]</scope>
</reference>
<reference key="6">
    <citation type="submission" date="2005-09" db="EMBL/GenBank/DDBJ databases">
        <authorList>
            <person name="Mural R.J."/>
            <person name="Istrail S."/>
            <person name="Sutton G.G."/>
            <person name="Florea L."/>
            <person name="Halpern A.L."/>
            <person name="Mobarry C.M."/>
            <person name="Lippert R."/>
            <person name="Walenz B."/>
            <person name="Shatkay H."/>
            <person name="Dew I."/>
            <person name="Miller J.R."/>
            <person name="Flanigan M.J."/>
            <person name="Edwards N.J."/>
            <person name="Bolanos R."/>
            <person name="Fasulo D."/>
            <person name="Halldorsson B.V."/>
            <person name="Hannenhalli S."/>
            <person name="Turner R."/>
            <person name="Yooseph S."/>
            <person name="Lu F."/>
            <person name="Nusskern D.R."/>
            <person name="Shue B.C."/>
            <person name="Zheng X.H."/>
            <person name="Zhong F."/>
            <person name="Delcher A.L."/>
            <person name="Huson D.H."/>
            <person name="Kravitz S.A."/>
            <person name="Mouchard L."/>
            <person name="Reinert K."/>
            <person name="Remington K.A."/>
            <person name="Clark A.G."/>
            <person name="Waterman M.S."/>
            <person name="Eichler E.E."/>
            <person name="Adams M.D."/>
            <person name="Hunkapiller M.W."/>
            <person name="Myers E.W."/>
            <person name="Venter J.C."/>
        </authorList>
    </citation>
    <scope>NUCLEOTIDE SEQUENCE [LARGE SCALE GENOMIC DNA]</scope>
    <scope>VARIANT ALA-573</scope>
</reference>
<reference key="7">
    <citation type="journal article" date="2004" name="Genome Res.">
        <title>The status, quality, and expansion of the NIH full-length cDNA project: the Mammalian Gene Collection (MGC).</title>
        <authorList>
            <consortium name="The MGC Project Team"/>
        </authorList>
    </citation>
    <scope>NUCLEOTIDE SEQUENCE [LARGE SCALE MRNA] (ISOFORM 2)</scope>
    <scope>VARIANT ALA-573</scope>
</reference>
<reference key="8">
    <citation type="journal article" date="2001" name="J. Cell Biol.">
        <title>Differentiation and stress-dependent nuclear-cytoplasmic redistribution of myopodin, a novel actin bundling protein.</title>
        <authorList>
            <person name="Weins A."/>
            <person name="Schwarz K."/>
            <person name="Faul C."/>
            <person name="Barisoni L."/>
            <person name="Linke W.A."/>
            <person name="Mundel P."/>
        </authorList>
    </citation>
    <scope>NUCLEOTIDE SEQUENCE [MRNA] OF 263-1093 (ISOFORM 1)</scope>
    <scope>VARIANT ALA-573</scope>
</reference>
<reference key="9">
    <citation type="journal article" date="2001" name="Neuromuscul. Disord.">
        <title>Identification of altered gene expression in skeletal muscles from Duchenne muscular dystrophy patients.</title>
        <authorList>
            <person name="Tkatchenko A.V."/>
            <person name="Pietu G."/>
            <person name="Cros N."/>
            <person name="Gannoun-Zaki L."/>
            <person name="Auffray C."/>
            <person name="Leger J.J."/>
            <person name="Dechesne C.A."/>
        </authorList>
    </citation>
    <scope>NUCLEOTIDE SEQUENCE [MRNA] OF 961-1093</scope>
    <scope>INDUCTION</scope>
    <scope>TISSUE SPECIFICITY</scope>
    <source>
        <tissue>Skeletal muscle</tissue>
    </source>
</reference>
<reference key="10">
    <citation type="journal article" date="2006" name="Cancer Res.">
        <title>Myopodin-mediated suppression of prostate cancer cell migration involves interaction with zyxin.</title>
        <authorList>
            <person name="Yu Y.P."/>
            <person name="Luo J.H."/>
        </authorList>
    </citation>
    <scope>INTERACTION WITH ZYX</scope>
    <scope>FUNCTION</scope>
</reference>
<reference key="11">
    <citation type="journal article" date="2008" name="Mol. Cell. Biochem.">
        <title>Interaction between importin 13 and myopodin suggests a nuclear import pathway for myopodin.</title>
        <authorList>
            <person name="Liang J."/>
            <person name="Ke G."/>
            <person name="You W."/>
            <person name="Peng Z."/>
            <person name="Lan J."/>
            <person name="Kalesse M."/>
            <person name="Tartakoff A.M."/>
            <person name="Kaplan F."/>
            <person name="Tao T."/>
        </authorList>
    </citation>
    <scope>INTERACTION WITH IPO13</scope>
</reference>
<reference key="12">
    <citation type="journal article" date="2011" name="Oncogene">
        <title>Phosphorylation and interaction of myopodin by integrin-link kinase lead to suppression of cell growth and motility in prostate cancer cells.</title>
        <authorList>
            <person name="Yu Y.P."/>
            <person name="Luo J.H."/>
        </authorList>
    </citation>
    <scope>INTERACTION WITH ILK</scope>
    <scope>PHOSPHORYLATION</scope>
</reference>
<reference key="13">
    <citation type="journal article" date="2012" name="Carcinogenesis">
        <title>Myopodin isoforms alter the chemokinetic response of PC3 cells in response to different migration stimuli via differential effects on Rho-ROCK signaling pathways.</title>
        <authorList>
            <person name="Kai F."/>
            <person name="Tanner K."/>
            <person name="King C."/>
            <person name="Duncan R."/>
        </authorList>
    </citation>
    <scope>FUNCTION (ISOFORMS 1; 2; 3 AND 5)</scope>
    <scope>ALTERNATIVE SPLICING (ISOFORMS 1; 2; 3 AND 5)</scope>
</reference>
<reference key="14">
    <citation type="journal article" date="2013" name="Curr. Biol.">
        <title>Cellular mechanotransduction relies on tension-induced and chaperone-assisted autophagy.</title>
        <authorList>
            <person name="Ulbricht A."/>
            <person name="Eppler F.J."/>
            <person name="Tapia V.E."/>
            <person name="van der Ven P.F."/>
            <person name="Hampe N."/>
            <person name="Hersch N."/>
            <person name="Vakeel P."/>
            <person name="Stadel D."/>
            <person name="Haas A."/>
            <person name="Saftig P."/>
            <person name="Behrends C."/>
            <person name="Fuerst D.O."/>
            <person name="Volkmer R."/>
            <person name="Hoffmann B."/>
            <person name="Kolanus W."/>
            <person name="Hoehfeld J."/>
        </authorList>
    </citation>
    <scope>INTERACTION WITH BAG3 AND VPS18</scope>
    <scope>ASSOCIATION WITH THE CASA COMPLEX</scope>
    <scope>DOMAIN</scope>
</reference>
<reference key="15">
    <citation type="journal article" date="2013" name="J. Muscle Res. Cell Motil.">
        <title>Myopodin is an F-actin bundling protein with multiple independent actin-binding regions.</title>
        <authorList>
            <person name="Linnemann A."/>
            <person name="Vakeel P."/>
            <person name="Bezerra E."/>
            <person name="Orfanos Z."/>
            <person name="Djinovic-Carugo K."/>
            <person name="van der Ven P.F."/>
            <person name="Kirfel G."/>
            <person name="Fuerst D.O."/>
        </authorList>
    </citation>
    <scope>FUNCTION</scope>
    <scope>ACTIN-BINDING</scope>
    <scope>SELF-ASSOCIATION</scope>
</reference>
<reference key="16">
    <citation type="journal article" date="2014" name="J. Proteomics">
        <title>An enzyme assisted RP-RPLC approach for in-depth analysis of human liver phosphoproteome.</title>
        <authorList>
            <person name="Bian Y."/>
            <person name="Song C."/>
            <person name="Cheng K."/>
            <person name="Dong M."/>
            <person name="Wang F."/>
            <person name="Huang J."/>
            <person name="Sun D."/>
            <person name="Wang L."/>
            <person name="Ye M."/>
            <person name="Zou H."/>
        </authorList>
    </citation>
    <scope>PHOSPHORYLATION [LARGE SCALE ANALYSIS] AT SER-274; THR-610; SER-611; TYR-622; THR-626; SER-729; THR-755; THR-774; SER-777; SER-902; SER-906 AND SER-1056</scope>
    <scope>PHOSPHORYLATION [LARGE SCALE ANALYSIS] AT SER-1138 (ISOFORM 2)</scope>
    <scope>PHOSPHORYLATION [LARGE SCALE ANALYSIS] AT SER-1107 (ISOFORM 4)</scope>
    <scope>IDENTIFICATION BY MASS SPECTROMETRY [LARGE SCALE ANALYSIS]</scope>
    <source>
        <tissue>Liver</tissue>
    </source>
</reference>
<reference key="17">
    <citation type="journal article" date="2015" name="Oncotarget">
        <title>Synaptopodin-2 induces assembly of peripheral actin bundles and immature focal adhesions to promote lamellipodia formation and prostate cancer cell migration.</title>
        <authorList>
            <person name="Kai F."/>
            <person name="Fawcett J.P."/>
            <person name="Duncan R."/>
        </authorList>
    </citation>
    <scope>FUNCTION (ISOFORM 5)</scope>
</reference>
<organism>
    <name type="scientific">Homo sapiens</name>
    <name type="common">Human</name>
    <dbReference type="NCBI Taxonomy" id="9606"/>
    <lineage>
        <taxon>Eukaryota</taxon>
        <taxon>Metazoa</taxon>
        <taxon>Chordata</taxon>
        <taxon>Craniata</taxon>
        <taxon>Vertebrata</taxon>
        <taxon>Euteleostomi</taxon>
        <taxon>Mammalia</taxon>
        <taxon>Eutheria</taxon>
        <taxon>Euarchontoglires</taxon>
        <taxon>Primates</taxon>
        <taxon>Haplorrhini</taxon>
        <taxon>Catarrhini</taxon>
        <taxon>Hominidae</taxon>
        <taxon>Homo</taxon>
    </lineage>
</organism>
<gene>
    <name type="primary">SYNPO2</name>
</gene>
<proteinExistence type="evidence at protein level"/>
<comment type="function">
    <text evidence="1 2 14 15 17 18 24 25">Has an actin-binding and actin-bundling activity. Can induce the formation of F-actin networks in an isoform-specific manner (PubMed:23225103, PubMed:24005909). At the sarcomeric Z lines is proposed to act as adapter protein that links nascent myofibers to the sarcolemma via ZYX and may play a role in early assembly and stabilization of the Z lines. Involved in autophagosome formation. May play a role in chaperone-assisted selective autophagy (CASA) involved in Z lines maintenance in striated muscle under mechanical tension; may link the client-processing CASA chaperone machinery to a membrane-tethering and fusion complex providing autophagosome membranes (By similarity). Involved in regulation of cell migration (PubMed:22915763, PubMed:25883213). May be a tumor suppressor (PubMed:16885336).</text>
</comment>
<comment type="function">
    <molecule>Isoform 1</molecule>
    <text evidence="14 17">Involved in regulation of cell migration. Can induce formation of thick, irregular actin bundles in the cell body.</text>
</comment>
<comment type="function">
    <molecule>Isoform 2</molecule>
    <text evidence="14 17">Involved in regulation of cell migration. Can induce long, well-organized actin bundles frequently orientated in parallel along the long axis of the cell showing characteristics of contractile ventral stress fibers.</text>
</comment>
<comment type="function">
    <molecule>Isoform 3</molecule>
    <text evidence="14 17">Involved in regulation of cell migration. Can induce an amorphous actin meshwork throughout the cell body containing a mixture of long and short, randomly organized thick and thin actin bundles.</text>
</comment>
<comment type="function">
    <molecule>Isoform 4</molecule>
    <text evidence="17">Can induce long, well-organized actin bundles frequently orientated in parallel along the long axis of the cell showing characteristics of contractile ventral stress fibers.</text>
</comment>
<comment type="function">
    <molecule>Isoform 5</molecule>
    <text evidence="14 17 18">Involved in regulation of cell migration in part dependent on the Rho-ROCK cascade; can promote formation of nascent focal adhesions, actin bundles at the leading cell edge and lamellipodia (PubMed:22915763, PubMed:25883213). Can induce formation of thick, irregular actin bundles in the cell body; the induced actin network is associated with enhanced cell migration in vitro.</text>
</comment>
<comment type="subunit">
    <text evidence="1 2 8 9 12 13 16">May self-associate in muscle cells under oxidative stress. Binds F-actin (PubMed:23225103). Interacts with ACTN2; ACTN2 is proposed to anchor SYOP2 at Z lines in mature myocytes (PubMed:20554076). Interacts with AKAP6, PPP3CA and CAMK2A. Interacts (phosphorylated form) with YWHAB; YWHAB competes with ACTN2 for interaction with SYNPO2. Interacts with KPNA2; mediating nuclear import of SYNOP2; dependent on interaction with YWHAB (By similarity). Interacts with IPO13; may be implicated in SYNOP2 nuclear import (PubMed:17828378). Interacts with ZYX, FLNC, ILK (PubMed:16885336, PubMed:20554076, PubMed:21643011). Interacts with BAG3 (via WW 1 domain). May associate with the CASA complex consisting of HSPA8, HSPB8 and BAG3. Interacts with VPS18 (PubMed:23434281).</text>
</comment>
<comment type="interaction">
    <interactant intactId="EBI-3453434">
        <id>Q9UMS6</id>
    </interactant>
    <interactant intactId="EBI-747644">
        <id>Q13418</id>
        <label>ILK</label>
    </interactant>
    <organismsDiffer>false</organismsDiffer>
    <experiments>6</experiments>
</comment>
<comment type="subcellular location">
    <subcellularLocation>
        <location evidence="2">Nucleus</location>
    </subcellularLocation>
    <subcellularLocation>
        <location evidence="2">Cytoplasm</location>
    </subcellularLocation>
    <subcellularLocation>
        <location evidence="17">Cytoplasm</location>
        <location evidence="17">Cytoskeleton</location>
    </subcellularLocation>
    <subcellularLocation>
        <location evidence="12">Cytoplasm</location>
        <location evidence="12">Myofibril</location>
        <location evidence="12">Sarcomere</location>
        <location evidence="12">Z line</location>
    </subcellularLocation>
    <subcellularLocation>
        <location evidence="12">Cell junction</location>
        <location evidence="12">Focal adhesion</location>
    </subcellularLocation>
    <text evidence="2 11">Shuttles between the nucleus and the cytoplasm in a differentiation-dependent and stress-induced fashion. In undifferentiated myoblasts strongly expressed in the nucleus, after induction of myotube differentiation is located to both nucleus and cytoplasm along acting filaments, and in differentiated myotubes is located at the Z lines. Upon stress redistributes from cytoplasm of myoblasts and myotubes to the nucleus. Nuclear import is KPNA2-dependent and promoted by phosphorylation by PKA and/or CaMK2, and inhibition of calcineurin. The nuclear export is XPO1-dependent (By similarity). Localized in a fiber-like pattern, partly overlapping with filamentous actin (PubMed:18371299).</text>
</comment>
<comment type="subcellular location">
    <molecule>Isoform 1</molecule>
    <subcellularLocation>
        <location evidence="17">Cytoplasm</location>
        <location evidence="17">Cytoskeleton</location>
    </subcellularLocation>
    <text evidence="17">Localizes to induced actin bundles with contiguous staining.</text>
</comment>
<comment type="subcellular location">
    <molecule>Isoform 2</molecule>
    <subcellularLocation>
        <location evidence="17">Cytoplasm</location>
        <location evidence="17">Cytoskeleton</location>
    </subcellularLocation>
    <text evidence="17">Localizes to induced actin bundles with punctuate staining.</text>
</comment>
<comment type="subcellular location">
    <molecule>Isoform 3</molecule>
    <subcellularLocation>
        <location evidence="17">Cytoplasm</location>
        <location evidence="17">Cytoskeleton</location>
    </subcellularLocation>
    <text evidence="17">Localizes to induced irregular actin bundles with contiguous and punctuated staining.</text>
</comment>
<comment type="subcellular location">
    <molecule>Isoform 4</molecule>
    <subcellularLocation>
        <location evidence="17">Cytoplasm</location>
        <location evidence="17">Cytoskeleton</location>
    </subcellularLocation>
    <text evidence="17">Localizes to induced actin bundles with punctuate staining.</text>
</comment>
<comment type="subcellular location">
    <molecule>Isoform 5</molecule>
    <subcellularLocation>
        <location evidence="17">Cytoplasm</location>
        <location evidence="17">Cytoskeleton</location>
    </subcellularLocation>
    <text evidence="17">Localizes to induced actin bundles with contiguous staining.</text>
</comment>
<comment type="alternative products">
    <event type="alternative promoter"/>
    <event type="alternative splicing"/>
    <isoform>
        <id>Q9UMS6-1</id>
        <name>1</name>
        <name>Myo1</name>
        <name>SYNOPb</name>
        <name>Synop2A</name>
        <sequence type="displayed"/>
    </isoform>
    <isoform>
        <id>Q9UMS6-2</id>
        <name>2</name>
        <name>Myo3</name>
        <name>SYNOPa</name>
        <name>Synop2C</name>
        <sequence type="described" ref="VSP_041222"/>
    </isoform>
    <isoform>
        <id>Q9UMS6-3</id>
        <name>3</name>
        <name>Myo2</name>
        <name>SYNOPc</name>
        <name>Synop2B</name>
        <sequence type="described" ref="VSP_041223"/>
    </isoform>
    <isoform>
        <id>Q9UMS6-4</id>
        <name>4</name>
        <name>Myo4</name>
        <name>Synop2D</name>
        <sequence type="described" ref="VSP_053771 VSP_041222"/>
    </isoform>
    <isoform>
        <id>Q9UMS6-5</id>
        <name>5</name>
        <name>(delta)N-MYO1</name>
        <name>SYNOPd</name>
        <name>SYNOP2As</name>
        <sequence type="described" ref="VSP_058887"/>
    </isoform>
</comment>
<comment type="tissue specificity">
    <text evidence="5 12">Expressed in heart muscle. Isoform 5 is specifically expressed in skeletal muscle.</text>
</comment>
<comment type="developmental stage">
    <text evidence="12">Detected in myoblasts within 24 hours after induction of myogenic differentiation preceeding the expression of sarcomeric alpha-actinin. Specifically at early stages colocalizes with ZYX at focal adhesions.</text>
</comment>
<comment type="induction">
    <text evidence="5">Down-regulated in muscle cell lines derived from patients with Duchenne muscular dystrophy (DMD).</text>
</comment>
<comment type="domain">
    <text evidence="26">The PPPY motif interacts with the WW domain 1 of BAG3.</text>
</comment>
<comment type="PTM">
    <text evidence="2 13">Phosphorylated by PKA, and by CaMK2 at multiple sites. Dephosphorylated by calcineurin; abrogating interaction with YWHAB and impairing nuclear import (By similarity). Phosphorylated by ILK.</text>
</comment>
<comment type="miscellaneous">
    <molecule>Isoform 1</molecule>
    <text>Produced by alternative promoter usage.</text>
</comment>
<comment type="miscellaneous">
    <molecule>Isoform 2</molecule>
    <text evidence="23">=Produced by alternative splicing of isoform 1.</text>
</comment>
<comment type="miscellaneous">
    <molecule>Isoform 3</molecule>
    <text evidence="23">=Produced by alternative splicing of isoform 1.</text>
</comment>
<comment type="miscellaneous">
    <molecule>Isoform 4</molecule>
    <text evidence="23">=Produced by alternative splicing of isoform 1.</text>
</comment>
<comment type="miscellaneous">
    <molecule>Isoform 5</molecule>
    <text evidence="12">Produced by alternative promoter usage.</text>
</comment>
<comment type="similarity">
    <text evidence="23">Belongs to the synaptopodin family.</text>
</comment>
<comment type="online information" name="Atlas of Genetics and Cytogenetics in Oncology and Haematology">
    <link uri="https://atlasgeneticsoncology.org/gene/488/SYNPO2"/>
</comment>
<protein>
    <recommendedName>
        <fullName>Synaptopodin-2</fullName>
    </recommendedName>
    <alternativeName>
        <fullName>Genethonin-2</fullName>
    </alternativeName>
    <alternativeName>
        <fullName>Myopodin</fullName>
    </alternativeName>
</protein>
<feature type="chain" id="PRO_0000187673" description="Synaptopodin-2">
    <location>
        <begin position="1"/>
        <end position="1093"/>
    </location>
</feature>
<feature type="domain" description="PDZ" evidence="3">
    <location>
        <begin position="6"/>
        <end position="88"/>
    </location>
</feature>
<feature type="region of interest" description="Interaction with VPS18" evidence="16">
    <location>
        <begin position="1"/>
        <end position="180"/>
    </location>
</feature>
<feature type="region of interest" description="Disordered" evidence="4">
    <location>
        <begin position="144"/>
        <end position="174"/>
    </location>
</feature>
<feature type="region of interest" description="Disordered" evidence="4">
    <location>
        <begin position="211"/>
        <end position="233"/>
    </location>
</feature>
<feature type="region of interest" description="Disordered" evidence="4">
    <location>
        <begin position="329"/>
        <end position="369"/>
    </location>
</feature>
<feature type="region of interest" description="Interaction with ACTN2" evidence="12">
    <location>
        <begin position="481"/>
        <end position="663"/>
    </location>
</feature>
<feature type="region of interest" description="Disordered" evidence="4">
    <location>
        <begin position="507"/>
        <end position="803"/>
    </location>
</feature>
<feature type="region of interest" description="F-actin binding" evidence="15">
    <location>
        <begin position="534"/>
        <end position="663"/>
    </location>
</feature>
<feature type="region of interest" description="Interaction with YWHAB" evidence="2">
    <location>
        <begin position="607"/>
        <end position="811"/>
    </location>
</feature>
<feature type="region of interest" description="Interaction with BAG3" evidence="16">
    <location>
        <begin position="615"/>
        <end position="626"/>
    </location>
</feature>
<feature type="region of interest" description="Interaction with ACTN2" evidence="12">
    <location>
        <begin position="664"/>
        <end position="924"/>
    </location>
</feature>
<feature type="region of interest" description="F-actin bundling activity" evidence="15">
    <location>
        <begin position="664"/>
        <end position="916"/>
    </location>
</feature>
<feature type="region of interest" description="F-actin binding" evidence="15">
    <location>
        <begin position="664"/>
        <end position="803"/>
    </location>
</feature>
<feature type="region of interest" description="Actin binding" evidence="2">
    <location>
        <begin position="751"/>
        <end position="900"/>
    </location>
</feature>
<feature type="region of interest" description="Interaction with FLNC" evidence="12">
    <location>
        <begin position="810"/>
        <end position="1093"/>
    </location>
</feature>
<feature type="region of interest" description="Disordered" evidence="4">
    <location>
        <begin position="834"/>
        <end position="870"/>
    </location>
</feature>
<feature type="region of interest" description="Interaction with ACTN2" evidence="12">
    <location>
        <begin position="901"/>
        <end position="1093"/>
    </location>
</feature>
<feature type="region of interest" description="Disordered" evidence="4">
    <location>
        <begin position="937"/>
        <end position="956"/>
    </location>
</feature>
<feature type="region of interest" description="Interaction with ZYX" evidence="8">
    <location>
        <begin position="1000"/>
        <end position="1019"/>
    </location>
</feature>
<feature type="region of interest" description="Disordered" evidence="4">
    <location>
        <begin position="1041"/>
        <end position="1064"/>
    </location>
</feature>
<feature type="short sequence motif" description="Nuclear localization signal" evidence="2">
    <location>
        <begin position="398"/>
        <end position="406"/>
    </location>
</feature>
<feature type="short sequence motif" description="PPPY motif" evidence="26">
    <location>
        <begin position="619"/>
        <end position="622"/>
    </location>
</feature>
<feature type="compositionally biased region" description="Basic and acidic residues" evidence="4">
    <location>
        <begin position="222"/>
        <end position="233"/>
    </location>
</feature>
<feature type="compositionally biased region" description="Basic residues" evidence="4">
    <location>
        <begin position="346"/>
        <end position="358"/>
    </location>
</feature>
<feature type="compositionally biased region" description="Basic and acidic residues" evidence="4">
    <location>
        <begin position="359"/>
        <end position="369"/>
    </location>
</feature>
<feature type="compositionally biased region" description="Polar residues" evidence="4">
    <location>
        <begin position="565"/>
        <end position="579"/>
    </location>
</feature>
<feature type="compositionally biased region" description="Polar residues" evidence="4">
    <location>
        <begin position="595"/>
        <end position="611"/>
    </location>
</feature>
<feature type="compositionally biased region" description="Pro residues" evidence="4">
    <location>
        <begin position="617"/>
        <end position="630"/>
    </location>
</feature>
<feature type="compositionally biased region" description="Pro residues" evidence="4">
    <location>
        <begin position="644"/>
        <end position="655"/>
    </location>
</feature>
<feature type="compositionally biased region" description="Basic and acidic residues" evidence="4">
    <location>
        <begin position="663"/>
        <end position="674"/>
    </location>
</feature>
<feature type="compositionally biased region" description="Low complexity" evidence="4">
    <location>
        <begin position="762"/>
        <end position="784"/>
    </location>
</feature>
<feature type="compositionally biased region" description="Polar residues" evidence="4">
    <location>
        <begin position="793"/>
        <end position="803"/>
    </location>
</feature>
<feature type="compositionally biased region" description="Polar residues" evidence="4">
    <location>
        <begin position="835"/>
        <end position="853"/>
    </location>
</feature>
<feature type="compositionally biased region" description="Low complexity" evidence="4">
    <location>
        <begin position="1041"/>
        <end position="1050"/>
    </location>
</feature>
<feature type="modified residue" description="Phosphoserine" evidence="27">
    <location>
        <position position="274"/>
    </location>
</feature>
<feature type="modified residue" description="Phosphoserine" evidence="2">
    <location>
        <position position="310"/>
    </location>
</feature>
<feature type="modified residue" description="Phosphoserine" evidence="1">
    <location>
        <position position="329"/>
    </location>
</feature>
<feature type="modified residue" description="Phosphoserine" evidence="1">
    <location>
        <position position="330"/>
    </location>
</feature>
<feature type="modified residue" description="Phosphothreonine" evidence="1">
    <location>
        <position position="333"/>
    </location>
</feature>
<feature type="modified residue" description="Phosphoserine" evidence="1">
    <location>
        <position position="548"/>
    </location>
</feature>
<feature type="modified residue" description="Phosphoserine" evidence="2">
    <location>
        <position position="549"/>
    </location>
</feature>
<feature type="modified residue" description="Phosphoserine" evidence="2">
    <location>
        <position position="551"/>
    </location>
</feature>
<feature type="modified residue" description="Phosphoserine" evidence="2">
    <location>
        <position position="604"/>
    </location>
</feature>
<feature type="modified residue" description="Phosphothreonine" evidence="27">
    <location>
        <position position="610"/>
    </location>
</feature>
<feature type="modified residue" description="Phosphoserine" evidence="27">
    <location>
        <position position="611"/>
    </location>
</feature>
<feature type="modified residue" description="Phosphotyrosine" evidence="27">
    <location>
        <position position="622"/>
    </location>
</feature>
<feature type="modified residue" description="Phosphothreonine" evidence="27">
    <location>
        <position position="626"/>
    </location>
</feature>
<feature type="modified residue" description="Phosphoserine" evidence="1">
    <location>
        <position position="705"/>
    </location>
</feature>
<feature type="modified residue" description="Phosphoserine" evidence="27">
    <location>
        <position position="729"/>
    </location>
</feature>
<feature type="modified residue" description="Phosphothreonine" evidence="27">
    <location>
        <position position="755"/>
    </location>
</feature>
<feature type="modified residue" description="Phosphothreonine" evidence="27">
    <location>
        <position position="774"/>
    </location>
</feature>
<feature type="modified residue" description="Phosphoserine" evidence="27">
    <location>
        <position position="777"/>
    </location>
</feature>
<feature type="modified residue" description="Phosphoserine" evidence="2">
    <location>
        <position position="781"/>
    </location>
</feature>
<feature type="modified residue" description="Phosphoserine" evidence="27">
    <location>
        <position position="902"/>
    </location>
</feature>
<feature type="modified residue" description="Phosphoserine" evidence="27">
    <location>
        <position position="906"/>
    </location>
</feature>
<feature type="modified residue" description="Phosphoserine" evidence="1">
    <location>
        <position position="910"/>
    </location>
</feature>
<feature type="modified residue" description="Phosphoserine" evidence="1">
    <location>
        <position position="1015"/>
    </location>
</feature>
<feature type="modified residue" description="Phosphoserine" evidence="27">
    <location>
        <position position="1056"/>
    </location>
</feature>
<feature type="splice variant" id="VSP_058887" description="In isoform 5.">
    <location>
        <begin position="1"/>
        <end position="395"/>
    </location>
</feature>
<feature type="splice variant" id="VSP_053771" description="In isoform 4." evidence="22">
    <original>MGTGDFICISMTGGAPWGFRLQGGKEQKQPLQVAK</original>
    <variation>MVTQ</variation>
    <location>
        <begin position="1"/>
        <end position="35"/>
    </location>
</feature>
<feature type="splice variant" id="VSP_041222" description="In isoform 2 and isoform 4." evidence="20 22">
    <original>VWKPSVVEE</original>
    <variation>ESGRSLSLPGRSVPPPISTSPWVYQPTYSYSSKPTDGLEKANKRPTPWEAAAKSPLGLVDDAFQPRNIQESIVANVVSAARRKVLPGPPEDWNERLSYIPQTQKAYMGSCGRQEYNVTANNNMSTTSQYGSQLPYAYYRQASRNDSAIMSMETRSDYCLPVADYNYNPHPRGWRRQT</variation>
    <location>
        <begin position="1085"/>
        <end position="1093"/>
    </location>
</feature>
<feature type="splice variant" id="VSP_041223" description="In isoform 3." evidence="21">
    <original>WKPSVVEE</original>
    <variation>KCKSGIHSQDIIRTYFPAYLSSST</variation>
    <location>
        <begin position="1086"/>
        <end position="1093"/>
    </location>
</feature>
<feature type="sequence variant" id="VAR_057256" description="In dbSNP:rs12645298." evidence="10">
    <original>G</original>
    <variation>A</variation>
    <location>
        <position position="154"/>
    </location>
</feature>
<feature type="sequence variant" id="VAR_057257" description="In dbSNP:rs17263971.">
    <original>Q</original>
    <variation>H</variation>
    <location>
        <position position="174"/>
    </location>
</feature>
<feature type="sequence variant" id="VAR_057258" description="In dbSNP:rs17050152.">
    <original>A</original>
    <variation>T</variation>
    <location>
        <position position="179"/>
    </location>
</feature>
<feature type="sequence variant" id="VAR_019670" description="In dbSNP:rs7698598." evidence="6 7 10 11 14 19">
    <original>T</original>
    <variation>A</variation>
    <location>
        <position position="573"/>
    </location>
</feature>
<feature type="sequence conflict" description="In Ref. 4; AL832031." evidence="23" ref="4">
    <original>C</original>
    <variation>R</variation>
    <location>
        <position position="61"/>
    </location>
</feature>
<feature type="sequence conflict" description="In Ref. 4; AL832031." evidence="23" ref="4">
    <location>
        <position position="147"/>
    </location>
</feature>
<feature type="sequence conflict" description="In Ref. 8; CAB51856." evidence="23" ref="8">
    <original>SSGR</original>
    <variation>IRHE</variation>
    <location>
        <begin position="263"/>
        <end position="266"/>
    </location>
</feature>
<feature type="sequence conflict" description="In Ref. 2; AGS94404." evidence="23" ref="2">
    <original>Q</original>
    <variation>P</variation>
    <location>
        <position position="508"/>
    </location>
</feature>
<feature type="sequence conflict" description="In Ref. 4; AL832031." evidence="23" ref="4">
    <original>I</original>
    <variation>M</variation>
    <location>
        <position position="667"/>
    </location>
</feature>
<feature type="sequence conflict" description="In Ref. 7; AAI50630." evidence="23" ref="7">
    <original>P</original>
    <variation>L</variation>
    <location>
        <position position="969"/>
    </location>
</feature>
<feature type="sequence conflict" description="In Ref. 7; AAI50630." evidence="23" ref="7">
    <original>G</original>
    <variation>V</variation>
    <location>
        <position position="987"/>
    </location>
</feature>
<feature type="modified residue" description="Phosphoserine" evidence="27">
    <location sequence="Q9UMS6-2">
        <position position="1138"/>
    </location>
</feature>
<feature type="modified residue" description="Phosphoserine" evidence="27">
    <location sequence="Q9UMS6-4">
        <position position="1107"/>
    </location>
</feature>
<accession>Q9UMS6</accession>
<accession>B2RWP6</accession>
<accession>B2Y8J9</accession>
<accession>C6H0M7</accession>
<accession>Q9UK89</accession>
<accession>S5XAM4</accession>
<keyword id="KW-0009">Actin-binding</keyword>
<keyword id="KW-0877">Alternative promoter usage</keyword>
<keyword id="KW-0025">Alternative splicing</keyword>
<keyword id="KW-0965">Cell junction</keyword>
<keyword id="KW-0963">Cytoplasm</keyword>
<keyword id="KW-0206">Cytoskeleton</keyword>
<keyword id="KW-0514">Muscle protein</keyword>
<keyword id="KW-0539">Nucleus</keyword>
<keyword id="KW-0597">Phosphoprotein</keyword>
<keyword id="KW-1267">Proteomics identification</keyword>
<keyword id="KW-1185">Reference proteome</keyword>
<keyword id="KW-0043">Tumor suppressor</keyword>
<dbReference type="EMBL" id="EU481975">
    <property type="protein sequence ID" value="ACC93875.1"/>
    <property type="molecule type" value="mRNA"/>
</dbReference>
<dbReference type="EMBL" id="KF147165">
    <property type="protein sequence ID" value="AGS94404.1"/>
    <property type="molecule type" value="mRNA"/>
</dbReference>
<dbReference type="EMBL" id="AL832031">
    <property type="status" value="NOT_ANNOTATED_CDS"/>
    <property type="molecule type" value="mRNA"/>
</dbReference>
<dbReference type="EMBL" id="AL833294">
    <property type="status" value="NOT_ANNOTATED_CDS"/>
    <property type="molecule type" value="mRNA"/>
</dbReference>
<dbReference type="EMBL" id="AC096745">
    <property type="status" value="NOT_ANNOTATED_CDS"/>
    <property type="molecule type" value="Genomic_DNA"/>
</dbReference>
<dbReference type="EMBL" id="AC107048">
    <property type="status" value="NOT_ANNOTATED_CDS"/>
    <property type="molecule type" value="Genomic_DNA"/>
</dbReference>
<dbReference type="EMBL" id="AC108030">
    <property type="status" value="NOT_ANNOTATED_CDS"/>
    <property type="molecule type" value="Genomic_DNA"/>
</dbReference>
<dbReference type="EMBL" id="CH471229">
    <property type="protein sequence ID" value="EAW73659.1"/>
    <property type="molecule type" value="Genomic_DNA"/>
</dbReference>
<dbReference type="EMBL" id="FN422000">
    <property type="protein sequence ID" value="CAZ66141.1"/>
    <property type="molecule type" value="mRNA"/>
</dbReference>
<dbReference type="EMBL" id="BC150629">
    <property type="protein sequence ID" value="AAI50630.1"/>
    <property type="molecule type" value="mRNA"/>
</dbReference>
<dbReference type="EMBL" id="AJ010482">
    <property type="protein sequence ID" value="CAB51856.1"/>
    <property type="molecule type" value="mRNA"/>
</dbReference>
<dbReference type="EMBL" id="AF177291">
    <property type="protein sequence ID" value="AAD55264.1"/>
    <property type="molecule type" value="mRNA"/>
</dbReference>
<dbReference type="CCDS" id="CCDS34054.1">
    <molecule id="Q9UMS6-2"/>
</dbReference>
<dbReference type="CCDS" id="CCDS47128.1">
    <molecule id="Q9UMS6-3"/>
</dbReference>
<dbReference type="CCDS" id="CCDS47129.1">
    <molecule id="Q9UMS6-1"/>
</dbReference>
<dbReference type="CCDS" id="CCDS75185.1">
    <molecule id="Q9UMS6-4"/>
</dbReference>
<dbReference type="CCDS" id="CCDS93613.1">
    <molecule id="Q9UMS6-5"/>
</dbReference>
<dbReference type="RefSeq" id="NP_001122405.1">
    <molecule id="Q9UMS6-1"/>
    <property type="nucleotide sequence ID" value="NM_001128933.3"/>
</dbReference>
<dbReference type="RefSeq" id="NP_001122406.1">
    <molecule id="Q9UMS6-3"/>
    <property type="nucleotide sequence ID" value="NM_001128934.3"/>
</dbReference>
<dbReference type="RefSeq" id="NP_001273683.1">
    <molecule id="Q9UMS6-4"/>
    <property type="nucleotide sequence ID" value="NM_001286754.2"/>
</dbReference>
<dbReference type="RefSeq" id="NP_001376193.1">
    <molecule id="Q9UMS6-5"/>
    <property type="nucleotide sequence ID" value="NM_001389264.1"/>
</dbReference>
<dbReference type="RefSeq" id="NP_597734.2">
    <molecule id="Q9UMS6-2"/>
    <property type="nucleotide sequence ID" value="NM_133477.3"/>
</dbReference>
<dbReference type="SMR" id="Q9UMS6"/>
<dbReference type="BioGRID" id="128105">
    <property type="interactions" value="28"/>
</dbReference>
<dbReference type="DIP" id="DIP-47311N"/>
<dbReference type="FunCoup" id="Q9UMS6">
    <property type="interactions" value="1278"/>
</dbReference>
<dbReference type="IntAct" id="Q9UMS6">
    <property type="interactions" value="9"/>
</dbReference>
<dbReference type="MINT" id="Q9UMS6"/>
<dbReference type="STRING" id="9606.ENSP00000306015"/>
<dbReference type="GlyGen" id="Q9UMS6">
    <property type="glycosylation" value="6 sites, 1 O-linked glycan (1 site)"/>
</dbReference>
<dbReference type="iPTMnet" id="Q9UMS6"/>
<dbReference type="PhosphoSitePlus" id="Q9UMS6"/>
<dbReference type="SwissPalm" id="Q9UMS6"/>
<dbReference type="BioMuta" id="SYNPO2"/>
<dbReference type="DMDM" id="51702160"/>
<dbReference type="jPOST" id="Q9UMS6"/>
<dbReference type="MassIVE" id="Q9UMS6"/>
<dbReference type="PaxDb" id="9606-ENSP00000306015"/>
<dbReference type="PeptideAtlas" id="Q9UMS6"/>
<dbReference type="ProteomicsDB" id="85210">
    <molecule id="Q9UMS6-1"/>
</dbReference>
<dbReference type="ProteomicsDB" id="85211">
    <molecule id="Q9UMS6-2"/>
</dbReference>
<dbReference type="ProteomicsDB" id="85212">
    <molecule id="Q9UMS6-3"/>
</dbReference>
<dbReference type="Pumba" id="Q9UMS6"/>
<dbReference type="Antibodypedia" id="48857">
    <property type="antibodies" value="86 antibodies from 25 providers"/>
</dbReference>
<dbReference type="DNASU" id="171024"/>
<dbReference type="Ensembl" id="ENST00000307142.9">
    <molecule id="Q9UMS6-2"/>
    <property type="protein sequence ID" value="ENSP00000306015.4"/>
    <property type="gene ID" value="ENSG00000172403.11"/>
</dbReference>
<dbReference type="Ensembl" id="ENST00000429713.7">
    <molecule id="Q9UMS6-1"/>
    <property type="protein sequence ID" value="ENSP00000395143.2"/>
    <property type="gene ID" value="ENSG00000172403.11"/>
</dbReference>
<dbReference type="Ensembl" id="ENST00000434046.6">
    <molecule id="Q9UMS6-3"/>
    <property type="protein sequence ID" value="ENSP00000390965.2"/>
    <property type="gene ID" value="ENSG00000172403.11"/>
</dbReference>
<dbReference type="Ensembl" id="ENST00000610556.4">
    <molecule id="Q9UMS6-4"/>
    <property type="protein sequence ID" value="ENSP00000484885.1"/>
    <property type="gene ID" value="ENSG00000172403.11"/>
</dbReference>
<dbReference type="Ensembl" id="ENST00000627783.2">
    <molecule id="Q9UMS6-5"/>
    <property type="protein sequence ID" value="ENSP00000498985.1"/>
    <property type="gene ID" value="ENSG00000172403.11"/>
</dbReference>
<dbReference type="GeneID" id="171024"/>
<dbReference type="KEGG" id="hsa:171024"/>
<dbReference type="MANE-Select" id="ENST00000307142.9">
    <molecule id="Q9UMS6-2"/>
    <property type="protein sequence ID" value="ENSP00000306015.4"/>
    <property type="RefSeq nucleotide sequence ID" value="NM_133477.3"/>
    <property type="RefSeq protein sequence ID" value="NP_597734.2"/>
</dbReference>
<dbReference type="UCSC" id="uc003icm.6">
    <molecule id="Q9UMS6-1"/>
    <property type="organism name" value="human"/>
</dbReference>
<dbReference type="AGR" id="HGNC:17732"/>
<dbReference type="CTD" id="171024"/>
<dbReference type="DisGeNET" id="171024"/>
<dbReference type="GeneCards" id="SYNPO2"/>
<dbReference type="HGNC" id="HGNC:17732">
    <property type="gene designation" value="SYNPO2"/>
</dbReference>
<dbReference type="HPA" id="ENSG00000172403">
    <property type="expression patterns" value="Tissue enhanced (skeletal muscle, tongue)"/>
</dbReference>
<dbReference type="MIM" id="620941">
    <property type="type" value="gene"/>
</dbReference>
<dbReference type="neXtProt" id="NX_Q9UMS6"/>
<dbReference type="OpenTargets" id="ENSG00000172403"/>
<dbReference type="PharmGKB" id="PA38244"/>
<dbReference type="VEuPathDB" id="HostDB:ENSG00000172403"/>
<dbReference type="eggNOG" id="KOG1703">
    <property type="taxonomic scope" value="Eukaryota"/>
</dbReference>
<dbReference type="GeneTree" id="ENSGT00950000183054"/>
<dbReference type="HOGENOM" id="CLU_007120_0_0_1"/>
<dbReference type="InParanoid" id="Q9UMS6"/>
<dbReference type="OMA" id="DCNYNPH"/>
<dbReference type="OrthoDB" id="6502734at2759"/>
<dbReference type="PAN-GO" id="Q9UMS6">
    <property type="GO annotations" value="6 GO annotations based on evolutionary models"/>
</dbReference>
<dbReference type="PhylomeDB" id="Q9UMS6"/>
<dbReference type="TreeFam" id="TF330867"/>
<dbReference type="PathwayCommons" id="Q9UMS6"/>
<dbReference type="SignaLink" id="Q9UMS6"/>
<dbReference type="BioGRID-ORCS" id="171024">
    <property type="hits" value="4 hits in 1142 CRISPR screens"/>
</dbReference>
<dbReference type="ChiTaRS" id="SYNPO2">
    <property type="organism name" value="human"/>
</dbReference>
<dbReference type="GeneWiki" id="SYNPO2"/>
<dbReference type="GenomeRNAi" id="171024"/>
<dbReference type="Pharos" id="Q9UMS6">
    <property type="development level" value="Tbio"/>
</dbReference>
<dbReference type="PRO" id="PR:Q9UMS6"/>
<dbReference type="Proteomes" id="UP000005640">
    <property type="component" value="Chromosome 4"/>
</dbReference>
<dbReference type="RNAct" id="Q9UMS6">
    <property type="molecule type" value="protein"/>
</dbReference>
<dbReference type="Bgee" id="ENSG00000172403">
    <property type="expression patterns" value="Expressed in saphenous vein and 190 other cell types or tissues"/>
</dbReference>
<dbReference type="ExpressionAtlas" id="Q9UMS6">
    <property type="expression patterns" value="baseline and differential"/>
</dbReference>
<dbReference type="GO" id="GO:0015629">
    <property type="term" value="C:actin cytoskeleton"/>
    <property type="evidence" value="ECO:0000314"/>
    <property type="project" value="LIFEdb"/>
</dbReference>
<dbReference type="GO" id="GO:0005829">
    <property type="term" value="C:cytosol"/>
    <property type="evidence" value="ECO:0000314"/>
    <property type="project" value="HPA"/>
</dbReference>
<dbReference type="GO" id="GO:0005925">
    <property type="term" value="C:focal adhesion"/>
    <property type="evidence" value="ECO:0000314"/>
    <property type="project" value="UniProtKB"/>
</dbReference>
<dbReference type="GO" id="GO:0043231">
    <property type="term" value="C:intracellular membrane-bounded organelle"/>
    <property type="evidence" value="ECO:0000314"/>
    <property type="project" value="HPA"/>
</dbReference>
<dbReference type="GO" id="GO:0005654">
    <property type="term" value="C:nucleoplasm"/>
    <property type="evidence" value="ECO:0000314"/>
    <property type="project" value="HPA"/>
</dbReference>
<dbReference type="GO" id="GO:0005634">
    <property type="term" value="C:nucleus"/>
    <property type="evidence" value="ECO:0000250"/>
    <property type="project" value="UniProtKB"/>
</dbReference>
<dbReference type="GO" id="GO:0001725">
    <property type="term" value="C:stress fiber"/>
    <property type="evidence" value="ECO:0000314"/>
    <property type="project" value="UniProtKB"/>
</dbReference>
<dbReference type="GO" id="GO:0030018">
    <property type="term" value="C:Z disc"/>
    <property type="evidence" value="ECO:0000314"/>
    <property type="project" value="UniProtKB"/>
</dbReference>
<dbReference type="GO" id="GO:0071889">
    <property type="term" value="F:14-3-3 protein binding"/>
    <property type="evidence" value="ECO:0000250"/>
    <property type="project" value="UniProtKB"/>
</dbReference>
<dbReference type="GO" id="GO:0003779">
    <property type="term" value="F:actin binding"/>
    <property type="evidence" value="ECO:0000318"/>
    <property type="project" value="GO_Central"/>
</dbReference>
<dbReference type="GO" id="GO:0051393">
    <property type="term" value="F:alpha-actinin binding"/>
    <property type="evidence" value="ECO:0000314"/>
    <property type="project" value="UniProtKB"/>
</dbReference>
<dbReference type="GO" id="GO:0031005">
    <property type="term" value="F:filamin binding"/>
    <property type="evidence" value="ECO:0000314"/>
    <property type="project" value="UniProtKB"/>
</dbReference>
<dbReference type="GO" id="GO:0051371">
    <property type="term" value="F:muscle alpha-actinin binding"/>
    <property type="evidence" value="ECO:0000250"/>
    <property type="project" value="UniProtKB"/>
</dbReference>
<dbReference type="GO" id="GO:0032233">
    <property type="term" value="P:positive regulation of actin filament bundle assembly"/>
    <property type="evidence" value="ECO:0000314"/>
    <property type="project" value="UniProtKB"/>
</dbReference>
<dbReference type="GO" id="GO:0030335">
    <property type="term" value="P:positive regulation of cell migration"/>
    <property type="evidence" value="ECO:0000314"/>
    <property type="project" value="UniProtKB"/>
</dbReference>
<dbReference type="GO" id="GO:2000298">
    <property type="term" value="P:regulation of Rho-dependent protein serine/threonine kinase activity"/>
    <property type="evidence" value="ECO:0000314"/>
    <property type="project" value="UniProtKB"/>
</dbReference>
<dbReference type="CDD" id="cd10820">
    <property type="entry name" value="PDZ_SYNPO2-like"/>
    <property type="match status" value="1"/>
</dbReference>
<dbReference type="FunFam" id="2.30.42.10:FF:000139">
    <property type="entry name" value="synaptopodin-2 isoform X1"/>
    <property type="match status" value="1"/>
</dbReference>
<dbReference type="Gene3D" id="2.30.42.10">
    <property type="match status" value="1"/>
</dbReference>
<dbReference type="InterPro" id="IPR001478">
    <property type="entry name" value="PDZ"/>
</dbReference>
<dbReference type="InterPro" id="IPR036034">
    <property type="entry name" value="PDZ_sf"/>
</dbReference>
<dbReference type="InterPro" id="IPR051976">
    <property type="entry name" value="Synaptopodin_domain"/>
</dbReference>
<dbReference type="PANTHER" id="PTHR24217">
    <property type="entry name" value="PUTATIVE-RELATED"/>
    <property type="match status" value="1"/>
</dbReference>
<dbReference type="PANTHER" id="PTHR24217:SF9">
    <property type="entry name" value="SYNAPTOPODIN-2"/>
    <property type="match status" value="1"/>
</dbReference>
<dbReference type="Pfam" id="PF00595">
    <property type="entry name" value="PDZ"/>
    <property type="match status" value="1"/>
</dbReference>
<dbReference type="SMART" id="SM00228">
    <property type="entry name" value="PDZ"/>
    <property type="match status" value="1"/>
</dbReference>
<dbReference type="SUPFAM" id="SSF50156">
    <property type="entry name" value="PDZ domain-like"/>
    <property type="match status" value="1"/>
</dbReference>
<dbReference type="PROSITE" id="PS50106">
    <property type="entry name" value="PDZ"/>
    <property type="match status" value="1"/>
</dbReference>